<feature type="chain" id="PRO_0000204150" description="L-fucose isomerase">
    <location>
        <begin position="1"/>
        <end position="591"/>
    </location>
</feature>
<feature type="active site" description="Proton acceptor" evidence="1">
    <location>
        <position position="337"/>
    </location>
</feature>
<feature type="active site" description="Proton acceptor" evidence="1">
    <location>
        <position position="361"/>
    </location>
</feature>
<feature type="binding site" evidence="1">
    <location>
        <position position="337"/>
    </location>
    <ligand>
        <name>Mn(2+)</name>
        <dbReference type="ChEBI" id="CHEBI:29035"/>
    </ligand>
</feature>
<feature type="binding site" evidence="1">
    <location>
        <position position="361"/>
    </location>
    <ligand>
        <name>Mn(2+)</name>
        <dbReference type="ChEBI" id="CHEBI:29035"/>
    </ligand>
</feature>
<feature type="binding site" evidence="1">
    <location>
        <position position="528"/>
    </location>
    <ligand>
        <name>Mn(2+)</name>
        <dbReference type="ChEBI" id="CHEBI:29035"/>
    </ligand>
</feature>
<evidence type="ECO:0000255" key="1">
    <source>
        <dbReference type="HAMAP-Rule" id="MF_01254"/>
    </source>
</evidence>
<keyword id="KW-0119">Carbohydrate metabolism</keyword>
<keyword id="KW-0963">Cytoplasm</keyword>
<keyword id="KW-0294">Fucose metabolism</keyword>
<keyword id="KW-0413">Isomerase</keyword>
<keyword id="KW-0464">Manganese</keyword>
<keyword id="KW-0479">Metal-binding</keyword>
<keyword id="KW-1185">Reference proteome</keyword>
<proteinExistence type="inferred from homology"/>
<organism>
    <name type="scientific">Salmonella typhimurium (strain LT2 / SGSC1412 / ATCC 700720)</name>
    <dbReference type="NCBI Taxonomy" id="99287"/>
    <lineage>
        <taxon>Bacteria</taxon>
        <taxon>Pseudomonadati</taxon>
        <taxon>Pseudomonadota</taxon>
        <taxon>Gammaproteobacteria</taxon>
        <taxon>Enterobacterales</taxon>
        <taxon>Enterobacteriaceae</taxon>
        <taxon>Salmonella</taxon>
    </lineage>
</organism>
<protein>
    <recommendedName>
        <fullName evidence="1">L-fucose isomerase</fullName>
        <ecNumber evidence="1">5.3.1.25</ecNumber>
    </recommendedName>
    <alternativeName>
        <fullName evidence="1">6-deoxy-L-galactose isomerase</fullName>
    </alternativeName>
    <alternativeName>
        <fullName>FucIase</fullName>
    </alternativeName>
</protein>
<reference key="1">
    <citation type="journal article" date="2001" name="Nature">
        <title>Complete genome sequence of Salmonella enterica serovar Typhimurium LT2.</title>
        <authorList>
            <person name="McClelland M."/>
            <person name="Sanderson K.E."/>
            <person name="Spieth J."/>
            <person name="Clifton S.W."/>
            <person name="Latreille P."/>
            <person name="Courtney L."/>
            <person name="Porwollik S."/>
            <person name="Ali J."/>
            <person name="Dante M."/>
            <person name="Du F."/>
            <person name="Hou S."/>
            <person name="Layman D."/>
            <person name="Leonard S."/>
            <person name="Nguyen C."/>
            <person name="Scott K."/>
            <person name="Holmes A."/>
            <person name="Grewal N."/>
            <person name="Mulvaney E."/>
            <person name="Ryan E."/>
            <person name="Sun H."/>
            <person name="Florea L."/>
            <person name="Miller W."/>
            <person name="Stoneking T."/>
            <person name="Nhan M."/>
            <person name="Waterston R."/>
            <person name="Wilson R.K."/>
        </authorList>
    </citation>
    <scope>NUCLEOTIDE SEQUENCE [LARGE SCALE GENOMIC DNA]</scope>
    <source>
        <strain>LT2 / SGSC1412 / ATCC 700720</strain>
    </source>
</reference>
<accession>Q8ZMC6</accession>
<name>FUCI_SALTY</name>
<dbReference type="EC" id="5.3.1.25" evidence="1"/>
<dbReference type="EMBL" id="AE006468">
    <property type="protein sequence ID" value="AAL21854.1"/>
    <property type="molecule type" value="Genomic_DNA"/>
</dbReference>
<dbReference type="RefSeq" id="NP_461895.1">
    <property type="nucleotide sequence ID" value="NC_003197.2"/>
</dbReference>
<dbReference type="RefSeq" id="WP_000724126.1">
    <property type="nucleotide sequence ID" value="NC_003197.2"/>
</dbReference>
<dbReference type="SMR" id="Q8ZMC6"/>
<dbReference type="STRING" id="99287.STM2976"/>
<dbReference type="PaxDb" id="99287-STM2976"/>
<dbReference type="GeneID" id="1254499"/>
<dbReference type="KEGG" id="stm:STM2976"/>
<dbReference type="PATRIC" id="fig|99287.12.peg.3152"/>
<dbReference type="HOGENOM" id="CLU_033326_1_0_6"/>
<dbReference type="OMA" id="NHGAISY"/>
<dbReference type="PhylomeDB" id="Q8ZMC6"/>
<dbReference type="BioCyc" id="SENT99287:STM2976-MONOMER"/>
<dbReference type="UniPathway" id="UPA00563">
    <property type="reaction ID" value="UER00624"/>
</dbReference>
<dbReference type="Proteomes" id="UP000001014">
    <property type="component" value="Chromosome"/>
</dbReference>
<dbReference type="GO" id="GO:0005737">
    <property type="term" value="C:cytoplasm"/>
    <property type="evidence" value="ECO:0007669"/>
    <property type="project" value="UniProtKB-SubCell"/>
</dbReference>
<dbReference type="GO" id="GO:0008790">
    <property type="term" value="F:arabinose isomerase activity"/>
    <property type="evidence" value="ECO:0000318"/>
    <property type="project" value="GO_Central"/>
</dbReference>
<dbReference type="GO" id="GO:0008736">
    <property type="term" value="F:L-fucose isomerase activity"/>
    <property type="evidence" value="ECO:0000318"/>
    <property type="project" value="GO_Central"/>
</dbReference>
<dbReference type="GO" id="GO:0030145">
    <property type="term" value="F:manganese ion binding"/>
    <property type="evidence" value="ECO:0007669"/>
    <property type="project" value="UniProtKB-UniRule"/>
</dbReference>
<dbReference type="GO" id="GO:0019571">
    <property type="term" value="P:D-arabinose catabolic process"/>
    <property type="evidence" value="ECO:0000318"/>
    <property type="project" value="GO_Central"/>
</dbReference>
<dbReference type="GO" id="GO:0042355">
    <property type="term" value="P:L-fucose catabolic process"/>
    <property type="evidence" value="ECO:0000318"/>
    <property type="project" value="GO_Central"/>
</dbReference>
<dbReference type="FunFam" id="3.20.14.10:FF:000001">
    <property type="entry name" value="L-fucose isomerase"/>
    <property type="match status" value="1"/>
</dbReference>
<dbReference type="FunFam" id="3.40.275.10:FF:000001">
    <property type="entry name" value="L-fucose isomerase"/>
    <property type="match status" value="1"/>
</dbReference>
<dbReference type="FunFam" id="3.40.50.1070:FF:000001">
    <property type="entry name" value="L-fucose isomerase"/>
    <property type="match status" value="1"/>
</dbReference>
<dbReference type="Gene3D" id="3.40.50.1070">
    <property type="match status" value="1"/>
</dbReference>
<dbReference type="Gene3D" id="3.40.275.10">
    <property type="entry name" value="L-fucose Isomerase, Chain A, domain 2"/>
    <property type="match status" value="1"/>
</dbReference>
<dbReference type="Gene3D" id="3.20.14.10">
    <property type="entry name" value="L-fucose/L-arabinose isomerase, C-terminal"/>
    <property type="match status" value="1"/>
</dbReference>
<dbReference type="HAMAP" id="MF_01254">
    <property type="entry name" value="Fucose_iso"/>
    <property type="match status" value="1"/>
</dbReference>
<dbReference type="InterPro" id="IPR004216">
    <property type="entry name" value="Fuc/Ara_isomerase_C"/>
</dbReference>
<dbReference type="InterPro" id="IPR038393">
    <property type="entry name" value="Fuc_iso_dom3_sf"/>
</dbReference>
<dbReference type="InterPro" id="IPR015888">
    <property type="entry name" value="Fuc_isomerase_C"/>
</dbReference>
<dbReference type="InterPro" id="IPR038391">
    <property type="entry name" value="Fucose_iso_dom1_sf"/>
</dbReference>
<dbReference type="InterPro" id="IPR012888">
    <property type="entry name" value="Fucose_iso_N1"/>
</dbReference>
<dbReference type="InterPro" id="IPR005763">
    <property type="entry name" value="Fucose_isomerase"/>
</dbReference>
<dbReference type="InterPro" id="IPR038392">
    <property type="entry name" value="Fucose_isomerase_dom2_sf"/>
</dbReference>
<dbReference type="InterPro" id="IPR009015">
    <property type="entry name" value="Fucose_isomerase_N/cen_sf"/>
</dbReference>
<dbReference type="InterPro" id="IPR012889">
    <property type="entry name" value="Fucose_isomerase_N2"/>
</dbReference>
<dbReference type="NCBIfam" id="TIGR01089">
    <property type="entry name" value="fucI"/>
    <property type="match status" value="1"/>
</dbReference>
<dbReference type="NCBIfam" id="NF008220">
    <property type="entry name" value="PRK10991.1"/>
    <property type="match status" value="1"/>
</dbReference>
<dbReference type="PANTHER" id="PTHR37840">
    <property type="entry name" value="L-FUCOSE ISOMERASE"/>
    <property type="match status" value="1"/>
</dbReference>
<dbReference type="PANTHER" id="PTHR37840:SF1">
    <property type="entry name" value="L-FUCOSE ISOMERASE"/>
    <property type="match status" value="1"/>
</dbReference>
<dbReference type="Pfam" id="PF02952">
    <property type="entry name" value="Fucose_iso_C"/>
    <property type="match status" value="1"/>
</dbReference>
<dbReference type="Pfam" id="PF07881">
    <property type="entry name" value="Fucose_iso_N1"/>
    <property type="match status" value="1"/>
</dbReference>
<dbReference type="Pfam" id="PF07882">
    <property type="entry name" value="Fucose_iso_N2"/>
    <property type="match status" value="1"/>
</dbReference>
<dbReference type="SUPFAM" id="SSF50443">
    <property type="entry name" value="FucI/AraA C-terminal domain-like"/>
    <property type="match status" value="1"/>
</dbReference>
<dbReference type="SUPFAM" id="SSF53743">
    <property type="entry name" value="FucI/AraA N-terminal and middle domains"/>
    <property type="match status" value="1"/>
</dbReference>
<sequence length="591" mass="64771">MKKISLPKIGIRPVIDGRRMGVRESLEEQTMNMAKATAALITEKIRHACGAQVECVIADTCIAGMAESAACEEKFSSQNVGVTITVTPCWCYGSETIDMDPMRPKAIWGFNGTERPGAVYLAAALAAHSQKGIPAFSIYGHDVQDADDTSIPADVEEKLLRFARAGLAVASMKGKSYLSVGGVSMGIAGSIVDHNFFESWLGMKVQAVDMTELRRRIDQKIYDEAELEMALAWADKNFRYGEDQNASQYKRNEAQNRAVLKESLLMAMCIRDMMQGNKTLADKGLVEESLGYNAIAAGFQGQRHWTDQYPNGDTAEALLNSSFDWNGVREPFVVATENDSLNGVAMLFGHQLTGTAQIFADVRTYWSPEAVERVTGQALSGLAEHGIIHLINSGSAALDGACKQRDSEGKPTMKPHWEISQQEADACLAATEWCPAIHEYFRGGGYSSRFLTEGGVPFTMTRVNIIKGLGPVLQIAEGWSVELPKAMHDQLDARTNSTWPTTWFAPRLTGKGPFTDVYSVMANWGANHGVLTIGHVGADFITLAAMLRIPVCMHNVEEAKIYRPSAWAAHGMDIEGQDYRACQNYGPLYKR</sequence>
<comment type="function">
    <text evidence="1">Converts the aldose L-fucose into the corresponding ketose L-fuculose.</text>
</comment>
<comment type="catalytic activity">
    <reaction evidence="1">
        <text>L-fucose = L-fuculose</text>
        <dbReference type="Rhea" id="RHEA:17233"/>
        <dbReference type="ChEBI" id="CHEBI:2181"/>
        <dbReference type="ChEBI" id="CHEBI:17617"/>
        <dbReference type="EC" id="5.3.1.25"/>
    </reaction>
</comment>
<comment type="cofactor">
    <cofactor evidence="1">
        <name>Mn(2+)</name>
        <dbReference type="ChEBI" id="CHEBI:29035"/>
    </cofactor>
</comment>
<comment type="pathway">
    <text evidence="1">Carbohydrate degradation; L-fucose degradation; L-lactaldehyde and glycerone phosphate from L-fucose: step 1/3.</text>
</comment>
<comment type="subunit">
    <text evidence="1">Homohexamer.</text>
</comment>
<comment type="subcellular location">
    <subcellularLocation>
        <location evidence="1">Cytoplasm</location>
    </subcellularLocation>
</comment>
<comment type="similarity">
    <text evidence="1">Belongs to the L-fucose isomerase family.</text>
</comment>
<gene>
    <name evidence="1" type="primary">fucI</name>
    <name type="ordered locus">STM2976</name>
</gene>